<comment type="function">
    <text evidence="1">Contributes to K(+)/H(+) antiport activity by supporting proton efflux to control proton extrusion and homeostasis in chloroplasts in a light-dependent manner to modulate photosynthesis. Prevents excessive induction of non-photochemical quenching (NPQ) under continuous-light conditions. Indirectly promotes efficient inorganic carbon uptake into chloroplasts.</text>
</comment>
<comment type="catalytic activity">
    <reaction evidence="1">
        <text>K(+)(in) + H(+)(out) = K(+)(out) + H(+)(in)</text>
        <dbReference type="Rhea" id="RHEA:29467"/>
        <dbReference type="ChEBI" id="CHEBI:15378"/>
        <dbReference type="ChEBI" id="CHEBI:29103"/>
    </reaction>
</comment>
<comment type="subcellular location">
    <subcellularLocation>
        <location evidence="1">Plastid</location>
        <location evidence="1">Chloroplast inner membrane</location>
        <topology evidence="1">Multi-pass membrane protein</topology>
    </subcellularLocation>
</comment>
<comment type="similarity">
    <text evidence="1 2">Belongs to the CemA family.</text>
</comment>
<geneLocation type="chloroplast"/>
<accession>A4GGB8</accession>
<accession>A8W800</accession>
<reference key="1">
    <citation type="journal article" date="2007" name="BMC Genomics">
        <title>Rapid evolutionary change of common bean (Phaseolus vulgaris L) plastome, and the genomic diversification of legume chloroplasts.</title>
        <authorList>
            <person name="Guo X."/>
            <person name="Castillo-Ramirez S."/>
            <person name="Gonzalez V."/>
            <person name="Bustos P."/>
            <person name="Fernandez-Vazquez J.L."/>
            <person name="Santamaria R.I."/>
            <person name="Arellano J."/>
            <person name="Cevallos M.A."/>
            <person name="Davila G."/>
        </authorList>
    </citation>
    <scope>NUCLEOTIDE SEQUENCE [LARGE SCALE GENOMIC DNA]</scope>
    <source>
        <strain>cv. Negro Jamapa</strain>
    </source>
</reference>
<reference key="2">
    <citation type="submission" date="2007-10" db="EMBL/GenBank/DDBJ databases">
        <title>Complete nucleotide sequence of the plastid genome of the common bean, Phaseolus vulgaris.</title>
        <authorList>
            <person name="Moore M.J."/>
            <person name="Triplett E.W."/>
            <person name="Broughton W.J."/>
            <person name="Soltis P.S."/>
            <person name="Soltis D.E."/>
        </authorList>
    </citation>
    <scope>NUCLEOTIDE SEQUENCE [LARGE SCALE GENOMIC DNA]</scope>
</reference>
<feature type="chain" id="PRO_0000293527" description="Potassium/proton antiporter CemA">
    <location>
        <begin position="1"/>
        <end position="227"/>
    </location>
</feature>
<feature type="transmembrane region" description="Helical" evidence="1">
    <location>
        <begin position="5"/>
        <end position="25"/>
    </location>
</feature>
<feature type="transmembrane region" description="Helical" evidence="1">
    <location>
        <begin position="112"/>
        <end position="132"/>
    </location>
</feature>
<feature type="transmembrane region" description="Helical" evidence="1">
    <location>
        <begin position="143"/>
        <end position="163"/>
    </location>
</feature>
<feature type="transmembrane region" description="Helical" evidence="1">
    <location>
        <begin position="187"/>
        <end position="207"/>
    </location>
</feature>
<evidence type="ECO:0000255" key="1">
    <source>
        <dbReference type="HAMAP-Rule" id="MF_01308"/>
    </source>
</evidence>
<evidence type="ECO:0000305" key="2"/>
<name>CEMA_PHAVU</name>
<keyword id="KW-0050">Antiport</keyword>
<keyword id="KW-0150">Chloroplast</keyword>
<keyword id="KW-0375">Hydrogen ion transport</keyword>
<keyword id="KW-0406">Ion transport</keyword>
<keyword id="KW-0472">Membrane</keyword>
<keyword id="KW-0934">Plastid</keyword>
<keyword id="KW-1001">Plastid inner membrane</keyword>
<keyword id="KW-0630">Potassium</keyword>
<keyword id="KW-0633">Potassium transport</keyword>
<keyword id="KW-0812">Transmembrane</keyword>
<keyword id="KW-1133">Transmembrane helix</keyword>
<keyword id="KW-0813">Transport</keyword>
<gene>
    <name evidence="1" type="primary">cemA</name>
</gene>
<dbReference type="EMBL" id="DQ886273">
    <property type="protein sequence ID" value="ABH88099.1"/>
    <property type="molecule type" value="Genomic_DNA"/>
</dbReference>
<dbReference type="EMBL" id="EU196765">
    <property type="protein sequence ID" value="ABW22770.1"/>
    <property type="molecule type" value="Genomic_DNA"/>
</dbReference>
<dbReference type="RefSeq" id="YP_001122819.1">
    <property type="nucleotide sequence ID" value="NC_009259.1"/>
</dbReference>
<dbReference type="GeneID" id="4961776"/>
<dbReference type="KEGG" id="pvu:4961776"/>
<dbReference type="GO" id="GO:0009706">
    <property type="term" value="C:chloroplast inner membrane"/>
    <property type="evidence" value="ECO:0007669"/>
    <property type="project" value="UniProtKB-SubCell"/>
</dbReference>
<dbReference type="GO" id="GO:0015297">
    <property type="term" value="F:antiporter activity"/>
    <property type="evidence" value="ECO:0007669"/>
    <property type="project" value="UniProtKB-KW"/>
</dbReference>
<dbReference type="GO" id="GO:0015078">
    <property type="term" value="F:proton transmembrane transporter activity"/>
    <property type="evidence" value="ECO:0007669"/>
    <property type="project" value="UniProtKB-UniRule"/>
</dbReference>
<dbReference type="GO" id="GO:0006813">
    <property type="term" value="P:potassium ion transport"/>
    <property type="evidence" value="ECO:0007669"/>
    <property type="project" value="UniProtKB-UniRule"/>
</dbReference>
<dbReference type="HAMAP" id="MF_01308">
    <property type="entry name" value="CemA_PxcA"/>
    <property type="match status" value="1"/>
</dbReference>
<dbReference type="InterPro" id="IPR004282">
    <property type="entry name" value="CemA"/>
</dbReference>
<dbReference type="PANTHER" id="PTHR33650:SF2">
    <property type="entry name" value="CHLOROPLAST ENVELOPE MEMBRANE PROTEIN"/>
    <property type="match status" value="1"/>
</dbReference>
<dbReference type="PANTHER" id="PTHR33650">
    <property type="entry name" value="CHLOROPLAST ENVELOPE MEMBRANE PROTEIN-RELATED"/>
    <property type="match status" value="1"/>
</dbReference>
<dbReference type="Pfam" id="PF03040">
    <property type="entry name" value="CemA"/>
    <property type="match status" value="1"/>
</dbReference>
<protein>
    <recommendedName>
        <fullName evidence="1">Potassium/proton antiporter CemA</fullName>
    </recommendedName>
    <alternativeName>
        <fullName evidence="1">Chloroplast envelope membrane protein A</fullName>
        <shortName evidence="1">CemA</shortName>
    </alternativeName>
</protein>
<sequence length="227" mass="26754">MKKKSISLLYLISIVFLPWCISFTFKKSLESWFINWWNTSQSEIFLNDIKEKSILKKFIELKELFFLDDMLKECPKTYLQNLRTGIYKETIQLIKTHNEDRMNTILHFSTNIICFFILSGYSILGNQELILINSLVREFIYNLSDTIKAFSILLLTDLCIGFHSTRGWELIMGFVSKDFGFAQNDQIISGLVSTFPVILDTIFKYWIFRYLNRISPSLVVIYHSMND</sequence>
<organism>
    <name type="scientific">Phaseolus vulgaris</name>
    <name type="common">Kidney bean</name>
    <name type="synonym">French bean</name>
    <dbReference type="NCBI Taxonomy" id="3885"/>
    <lineage>
        <taxon>Eukaryota</taxon>
        <taxon>Viridiplantae</taxon>
        <taxon>Streptophyta</taxon>
        <taxon>Embryophyta</taxon>
        <taxon>Tracheophyta</taxon>
        <taxon>Spermatophyta</taxon>
        <taxon>Magnoliopsida</taxon>
        <taxon>eudicotyledons</taxon>
        <taxon>Gunneridae</taxon>
        <taxon>Pentapetalae</taxon>
        <taxon>rosids</taxon>
        <taxon>fabids</taxon>
        <taxon>Fabales</taxon>
        <taxon>Fabaceae</taxon>
        <taxon>Papilionoideae</taxon>
        <taxon>50 kb inversion clade</taxon>
        <taxon>NPAAA clade</taxon>
        <taxon>indigoferoid/millettioid clade</taxon>
        <taxon>Phaseoleae</taxon>
        <taxon>Phaseolus</taxon>
    </lineage>
</organism>
<proteinExistence type="inferred from homology"/>